<protein>
    <recommendedName>
        <fullName evidence="1">Chaperone protein DnaJ</fullName>
    </recommendedName>
</protein>
<gene>
    <name evidence="1" type="primary">dnaJ</name>
    <name type="ordered locus">USA300HOU_1580</name>
</gene>
<reference key="1">
    <citation type="journal article" date="2007" name="BMC Microbiol.">
        <title>Subtle genetic changes enhance virulence of methicillin resistant and sensitive Staphylococcus aureus.</title>
        <authorList>
            <person name="Highlander S.K."/>
            <person name="Hulten K.G."/>
            <person name="Qin X."/>
            <person name="Jiang H."/>
            <person name="Yerrapragada S."/>
            <person name="Mason E.O. Jr."/>
            <person name="Shang Y."/>
            <person name="Williams T.M."/>
            <person name="Fortunov R.M."/>
            <person name="Liu Y."/>
            <person name="Igboeli O."/>
            <person name="Petrosino J."/>
            <person name="Tirumalai M."/>
            <person name="Uzman A."/>
            <person name="Fox G.E."/>
            <person name="Cardenas A.M."/>
            <person name="Muzny D.M."/>
            <person name="Hemphill L."/>
            <person name="Ding Y."/>
            <person name="Dugan S."/>
            <person name="Blyth P.R."/>
            <person name="Buhay C.J."/>
            <person name="Dinh H.H."/>
            <person name="Hawes A.C."/>
            <person name="Holder M."/>
            <person name="Kovar C.L."/>
            <person name="Lee S.L."/>
            <person name="Liu W."/>
            <person name="Nazareth L.V."/>
            <person name="Wang Q."/>
            <person name="Zhou J."/>
            <person name="Kaplan S.L."/>
            <person name="Weinstock G.M."/>
        </authorList>
    </citation>
    <scope>NUCLEOTIDE SEQUENCE [LARGE SCALE GENOMIC DNA]</scope>
    <source>
        <strain>USA300 / TCH1516</strain>
    </source>
</reference>
<accession>A8Z4B8</accession>
<proteinExistence type="inferred from homology"/>
<feature type="chain" id="PRO_1000085315" description="Chaperone protein DnaJ">
    <location>
        <begin position="1"/>
        <end position="379"/>
    </location>
</feature>
<feature type="domain" description="J" evidence="1">
    <location>
        <begin position="5"/>
        <end position="69"/>
    </location>
</feature>
<feature type="repeat" description="CXXCXGXG motif">
    <location>
        <begin position="149"/>
        <end position="156"/>
    </location>
</feature>
<feature type="repeat" description="CXXCXGXG motif">
    <location>
        <begin position="166"/>
        <end position="173"/>
    </location>
</feature>
<feature type="repeat" description="CXXCXGXG motif">
    <location>
        <begin position="192"/>
        <end position="199"/>
    </location>
</feature>
<feature type="repeat" description="CXXCXGXG motif">
    <location>
        <begin position="206"/>
        <end position="213"/>
    </location>
</feature>
<feature type="zinc finger region" description="CR-type" evidence="1">
    <location>
        <begin position="136"/>
        <end position="218"/>
    </location>
</feature>
<feature type="binding site" evidence="1">
    <location>
        <position position="149"/>
    </location>
    <ligand>
        <name>Zn(2+)</name>
        <dbReference type="ChEBI" id="CHEBI:29105"/>
        <label>1</label>
    </ligand>
</feature>
<feature type="binding site" evidence="1">
    <location>
        <position position="152"/>
    </location>
    <ligand>
        <name>Zn(2+)</name>
        <dbReference type="ChEBI" id="CHEBI:29105"/>
        <label>1</label>
    </ligand>
</feature>
<feature type="binding site" evidence="1">
    <location>
        <position position="166"/>
    </location>
    <ligand>
        <name>Zn(2+)</name>
        <dbReference type="ChEBI" id="CHEBI:29105"/>
        <label>2</label>
    </ligand>
</feature>
<feature type="binding site" evidence="1">
    <location>
        <position position="169"/>
    </location>
    <ligand>
        <name>Zn(2+)</name>
        <dbReference type="ChEBI" id="CHEBI:29105"/>
        <label>2</label>
    </ligand>
</feature>
<feature type="binding site" evidence="1">
    <location>
        <position position="192"/>
    </location>
    <ligand>
        <name>Zn(2+)</name>
        <dbReference type="ChEBI" id="CHEBI:29105"/>
        <label>2</label>
    </ligand>
</feature>
<feature type="binding site" evidence="1">
    <location>
        <position position="195"/>
    </location>
    <ligand>
        <name>Zn(2+)</name>
        <dbReference type="ChEBI" id="CHEBI:29105"/>
        <label>2</label>
    </ligand>
</feature>
<feature type="binding site" evidence="1">
    <location>
        <position position="206"/>
    </location>
    <ligand>
        <name>Zn(2+)</name>
        <dbReference type="ChEBI" id="CHEBI:29105"/>
        <label>1</label>
    </ligand>
</feature>
<feature type="binding site" evidence="1">
    <location>
        <position position="209"/>
    </location>
    <ligand>
        <name>Zn(2+)</name>
        <dbReference type="ChEBI" id="CHEBI:29105"/>
        <label>1</label>
    </ligand>
</feature>
<keyword id="KW-0143">Chaperone</keyword>
<keyword id="KW-0963">Cytoplasm</keyword>
<keyword id="KW-0235">DNA replication</keyword>
<keyword id="KW-0479">Metal-binding</keyword>
<keyword id="KW-0677">Repeat</keyword>
<keyword id="KW-0346">Stress response</keyword>
<keyword id="KW-0862">Zinc</keyword>
<keyword id="KW-0863">Zinc-finger</keyword>
<dbReference type="EMBL" id="CP000730">
    <property type="protein sequence ID" value="ABX29587.1"/>
    <property type="molecule type" value="Genomic_DNA"/>
</dbReference>
<dbReference type="RefSeq" id="WP_001119021.1">
    <property type="nucleotide sequence ID" value="NC_010079.1"/>
</dbReference>
<dbReference type="SMR" id="A8Z4B8"/>
<dbReference type="KEGG" id="sax:USA300HOU_1580"/>
<dbReference type="HOGENOM" id="CLU_017633_0_7_9"/>
<dbReference type="GO" id="GO:0005737">
    <property type="term" value="C:cytoplasm"/>
    <property type="evidence" value="ECO:0007669"/>
    <property type="project" value="UniProtKB-SubCell"/>
</dbReference>
<dbReference type="GO" id="GO:0005524">
    <property type="term" value="F:ATP binding"/>
    <property type="evidence" value="ECO:0007669"/>
    <property type="project" value="InterPro"/>
</dbReference>
<dbReference type="GO" id="GO:0031072">
    <property type="term" value="F:heat shock protein binding"/>
    <property type="evidence" value="ECO:0007669"/>
    <property type="project" value="InterPro"/>
</dbReference>
<dbReference type="GO" id="GO:0051082">
    <property type="term" value="F:unfolded protein binding"/>
    <property type="evidence" value="ECO:0007669"/>
    <property type="project" value="UniProtKB-UniRule"/>
</dbReference>
<dbReference type="GO" id="GO:0008270">
    <property type="term" value="F:zinc ion binding"/>
    <property type="evidence" value="ECO:0007669"/>
    <property type="project" value="UniProtKB-UniRule"/>
</dbReference>
<dbReference type="GO" id="GO:0051085">
    <property type="term" value="P:chaperone cofactor-dependent protein refolding"/>
    <property type="evidence" value="ECO:0007669"/>
    <property type="project" value="TreeGrafter"/>
</dbReference>
<dbReference type="GO" id="GO:0006260">
    <property type="term" value="P:DNA replication"/>
    <property type="evidence" value="ECO:0007669"/>
    <property type="project" value="UniProtKB-KW"/>
</dbReference>
<dbReference type="GO" id="GO:0042026">
    <property type="term" value="P:protein refolding"/>
    <property type="evidence" value="ECO:0007669"/>
    <property type="project" value="TreeGrafter"/>
</dbReference>
<dbReference type="GO" id="GO:0009408">
    <property type="term" value="P:response to heat"/>
    <property type="evidence" value="ECO:0007669"/>
    <property type="project" value="InterPro"/>
</dbReference>
<dbReference type="CDD" id="cd06257">
    <property type="entry name" value="DnaJ"/>
    <property type="match status" value="1"/>
</dbReference>
<dbReference type="CDD" id="cd10747">
    <property type="entry name" value="DnaJ_C"/>
    <property type="match status" value="1"/>
</dbReference>
<dbReference type="CDD" id="cd10719">
    <property type="entry name" value="DnaJ_zf"/>
    <property type="match status" value="1"/>
</dbReference>
<dbReference type="FunFam" id="1.10.287.110:FF:000031">
    <property type="entry name" value="Molecular chaperone DnaJ"/>
    <property type="match status" value="1"/>
</dbReference>
<dbReference type="FunFam" id="2.10.230.10:FF:000002">
    <property type="entry name" value="Molecular chaperone DnaJ"/>
    <property type="match status" value="1"/>
</dbReference>
<dbReference type="FunFam" id="2.60.260.20:FF:000004">
    <property type="entry name" value="Molecular chaperone DnaJ"/>
    <property type="match status" value="1"/>
</dbReference>
<dbReference type="Gene3D" id="1.10.287.110">
    <property type="entry name" value="DnaJ domain"/>
    <property type="match status" value="1"/>
</dbReference>
<dbReference type="Gene3D" id="2.10.230.10">
    <property type="entry name" value="Heat shock protein DnaJ, cysteine-rich domain"/>
    <property type="match status" value="1"/>
</dbReference>
<dbReference type="Gene3D" id="2.60.260.20">
    <property type="entry name" value="Urease metallochaperone UreE, N-terminal domain"/>
    <property type="match status" value="2"/>
</dbReference>
<dbReference type="HAMAP" id="MF_01152">
    <property type="entry name" value="DnaJ"/>
    <property type="match status" value="1"/>
</dbReference>
<dbReference type="InterPro" id="IPR012724">
    <property type="entry name" value="DnaJ"/>
</dbReference>
<dbReference type="InterPro" id="IPR002939">
    <property type="entry name" value="DnaJ_C"/>
</dbReference>
<dbReference type="InterPro" id="IPR001623">
    <property type="entry name" value="DnaJ_domain"/>
</dbReference>
<dbReference type="InterPro" id="IPR018253">
    <property type="entry name" value="DnaJ_domain_CS"/>
</dbReference>
<dbReference type="InterPro" id="IPR008971">
    <property type="entry name" value="HSP40/DnaJ_pept-bd"/>
</dbReference>
<dbReference type="InterPro" id="IPR001305">
    <property type="entry name" value="HSP_DnaJ_Cys-rich_dom"/>
</dbReference>
<dbReference type="InterPro" id="IPR036410">
    <property type="entry name" value="HSP_DnaJ_Cys-rich_dom_sf"/>
</dbReference>
<dbReference type="InterPro" id="IPR036869">
    <property type="entry name" value="J_dom_sf"/>
</dbReference>
<dbReference type="NCBIfam" id="TIGR02349">
    <property type="entry name" value="DnaJ_bact"/>
    <property type="match status" value="1"/>
</dbReference>
<dbReference type="NCBIfam" id="NF008035">
    <property type="entry name" value="PRK10767.1"/>
    <property type="match status" value="1"/>
</dbReference>
<dbReference type="NCBIfam" id="NF010873">
    <property type="entry name" value="PRK14280.1"/>
    <property type="match status" value="1"/>
</dbReference>
<dbReference type="PANTHER" id="PTHR43096:SF48">
    <property type="entry name" value="CHAPERONE PROTEIN DNAJ"/>
    <property type="match status" value="1"/>
</dbReference>
<dbReference type="PANTHER" id="PTHR43096">
    <property type="entry name" value="DNAJ HOMOLOG 1, MITOCHONDRIAL-RELATED"/>
    <property type="match status" value="1"/>
</dbReference>
<dbReference type="Pfam" id="PF00226">
    <property type="entry name" value="DnaJ"/>
    <property type="match status" value="1"/>
</dbReference>
<dbReference type="Pfam" id="PF01556">
    <property type="entry name" value="DnaJ_C"/>
    <property type="match status" value="1"/>
</dbReference>
<dbReference type="Pfam" id="PF00684">
    <property type="entry name" value="DnaJ_CXXCXGXG"/>
    <property type="match status" value="1"/>
</dbReference>
<dbReference type="PRINTS" id="PR00625">
    <property type="entry name" value="JDOMAIN"/>
</dbReference>
<dbReference type="SMART" id="SM00271">
    <property type="entry name" value="DnaJ"/>
    <property type="match status" value="1"/>
</dbReference>
<dbReference type="SUPFAM" id="SSF46565">
    <property type="entry name" value="Chaperone J-domain"/>
    <property type="match status" value="1"/>
</dbReference>
<dbReference type="SUPFAM" id="SSF57938">
    <property type="entry name" value="DnaJ/Hsp40 cysteine-rich domain"/>
    <property type="match status" value="1"/>
</dbReference>
<dbReference type="SUPFAM" id="SSF49493">
    <property type="entry name" value="HSP40/DnaJ peptide-binding domain"/>
    <property type="match status" value="2"/>
</dbReference>
<dbReference type="PROSITE" id="PS00636">
    <property type="entry name" value="DNAJ_1"/>
    <property type="match status" value="1"/>
</dbReference>
<dbReference type="PROSITE" id="PS50076">
    <property type="entry name" value="DNAJ_2"/>
    <property type="match status" value="1"/>
</dbReference>
<dbReference type="PROSITE" id="PS51188">
    <property type="entry name" value="ZF_CR"/>
    <property type="match status" value="1"/>
</dbReference>
<comment type="function">
    <text evidence="1">Participates actively in the response to hyperosmotic and heat shock by preventing the aggregation of stress-denatured proteins and by disaggregating proteins, also in an autonomous, DnaK-independent fashion. Unfolded proteins bind initially to DnaJ; upon interaction with the DnaJ-bound protein, DnaK hydrolyzes its bound ATP, resulting in the formation of a stable complex. GrpE releases ADP from DnaK; ATP binding to DnaK triggers the release of the substrate protein, thus completing the reaction cycle. Several rounds of ATP-dependent interactions between DnaJ, DnaK and GrpE are required for fully efficient folding. Also involved, together with DnaK and GrpE, in the DNA replication of plasmids through activation of initiation proteins.</text>
</comment>
<comment type="cofactor">
    <cofactor evidence="1">
        <name>Zn(2+)</name>
        <dbReference type="ChEBI" id="CHEBI:29105"/>
    </cofactor>
    <text evidence="1">Binds 2 Zn(2+) ions per monomer.</text>
</comment>
<comment type="subunit">
    <text evidence="1">Homodimer.</text>
</comment>
<comment type="subcellular location">
    <subcellularLocation>
        <location evidence="1">Cytoplasm</location>
    </subcellularLocation>
</comment>
<comment type="domain">
    <text evidence="1">The J domain is necessary and sufficient to stimulate DnaK ATPase activity. Zinc center 1 plays an important role in the autonomous, DnaK-independent chaperone activity of DnaJ. Zinc center 2 is essential for interaction with DnaK and for DnaJ activity.</text>
</comment>
<comment type="similarity">
    <text evidence="1">Belongs to the DnaJ family.</text>
</comment>
<evidence type="ECO:0000255" key="1">
    <source>
        <dbReference type="HAMAP-Rule" id="MF_01152"/>
    </source>
</evidence>
<name>DNAJ_STAAT</name>
<organism>
    <name type="scientific">Staphylococcus aureus (strain USA300 / TCH1516)</name>
    <dbReference type="NCBI Taxonomy" id="451516"/>
    <lineage>
        <taxon>Bacteria</taxon>
        <taxon>Bacillati</taxon>
        <taxon>Bacillota</taxon>
        <taxon>Bacilli</taxon>
        <taxon>Bacillales</taxon>
        <taxon>Staphylococcaceae</taxon>
        <taxon>Staphylococcus</taxon>
    </lineage>
</organism>
<sequence>MAKRDYYEVLGISKDASKDEIKKAYRKLSKKYHPDINKEEGADEKFKEISEAYEVLSDDNKRASYDQFGHDGPQGFGGQGFNGSDFGGFSGFGGGGFEDIFSSFFGGGRQRDPNAPQKGDDLQYTMTLTFEEAVFGTTKEISIRKDVTCETCHGDGAKPGTSKKTCSYCNGAGHVAVEQNTILGRVRTEQVCPKCNGSGQEFEEACPTCHGKGTENKTVKLEVKVPEGVDNEQQIRLAGEGSPGVNGGPAGDLYVVFRVKPSETFKRDGDDIYYKLNVSFPQAALGDEIKIPTLNNEVMLTIPAGTQTGKQFRLKEKGIKNVHGYGYGDLYVDIKVVTPTKLTDRQKELMKEFAQLNGEEINEQPSNFKDRAKRFFKGE</sequence>